<organism>
    <name type="scientific">Chlorobium phaeovibrioides (strain DSM 265 / 1930)</name>
    <name type="common">Prosthecochloris vibrioformis (strain DSM 265)</name>
    <dbReference type="NCBI Taxonomy" id="290318"/>
    <lineage>
        <taxon>Bacteria</taxon>
        <taxon>Pseudomonadati</taxon>
        <taxon>Chlorobiota</taxon>
        <taxon>Chlorobiia</taxon>
        <taxon>Chlorobiales</taxon>
        <taxon>Chlorobiaceae</taxon>
        <taxon>Chlorobium/Pelodictyon group</taxon>
        <taxon>Chlorobium</taxon>
    </lineage>
</organism>
<comment type="function">
    <text evidence="1">Catalyzes the condensation of ATP and 5-phosphoribose 1-diphosphate to form N'-(5'-phosphoribosyl)-ATP (PR-ATP). Has a crucial role in the pathway because the rate of histidine biosynthesis seems to be controlled primarily by regulation of HisG enzymatic activity.</text>
</comment>
<comment type="catalytic activity">
    <reaction evidence="1">
        <text>1-(5-phospho-beta-D-ribosyl)-ATP + diphosphate = 5-phospho-alpha-D-ribose 1-diphosphate + ATP</text>
        <dbReference type="Rhea" id="RHEA:18473"/>
        <dbReference type="ChEBI" id="CHEBI:30616"/>
        <dbReference type="ChEBI" id="CHEBI:33019"/>
        <dbReference type="ChEBI" id="CHEBI:58017"/>
        <dbReference type="ChEBI" id="CHEBI:73183"/>
        <dbReference type="EC" id="2.4.2.17"/>
    </reaction>
</comment>
<comment type="cofactor">
    <cofactor evidence="1">
        <name>Mg(2+)</name>
        <dbReference type="ChEBI" id="CHEBI:18420"/>
    </cofactor>
</comment>
<comment type="activity regulation">
    <text evidence="1">Feedback inhibited by histidine.</text>
</comment>
<comment type="pathway">
    <text evidence="1">Amino-acid biosynthesis; L-histidine biosynthesis; L-histidine from 5-phospho-alpha-D-ribose 1-diphosphate: step 1/9.</text>
</comment>
<comment type="subcellular location">
    <subcellularLocation>
        <location evidence="1">Cytoplasm</location>
    </subcellularLocation>
</comment>
<comment type="similarity">
    <text evidence="1">Belongs to the ATP phosphoribosyltransferase family. Long subfamily.</text>
</comment>
<dbReference type="EC" id="2.4.2.17" evidence="1"/>
<dbReference type="EMBL" id="CP000607">
    <property type="protein sequence ID" value="ABP36329.1"/>
    <property type="molecule type" value="Genomic_DNA"/>
</dbReference>
<dbReference type="SMR" id="A4SCX0"/>
<dbReference type="STRING" id="290318.Cvib_0307"/>
<dbReference type="KEGG" id="pvi:Cvib_0307"/>
<dbReference type="eggNOG" id="COG0040">
    <property type="taxonomic scope" value="Bacteria"/>
</dbReference>
<dbReference type="HOGENOM" id="CLU_038115_1_1_10"/>
<dbReference type="OrthoDB" id="9801867at2"/>
<dbReference type="UniPathway" id="UPA00031">
    <property type="reaction ID" value="UER00006"/>
</dbReference>
<dbReference type="GO" id="GO:0005737">
    <property type="term" value="C:cytoplasm"/>
    <property type="evidence" value="ECO:0007669"/>
    <property type="project" value="UniProtKB-SubCell"/>
</dbReference>
<dbReference type="GO" id="GO:0005524">
    <property type="term" value="F:ATP binding"/>
    <property type="evidence" value="ECO:0007669"/>
    <property type="project" value="UniProtKB-KW"/>
</dbReference>
<dbReference type="GO" id="GO:0003879">
    <property type="term" value="F:ATP phosphoribosyltransferase activity"/>
    <property type="evidence" value="ECO:0007669"/>
    <property type="project" value="UniProtKB-UniRule"/>
</dbReference>
<dbReference type="GO" id="GO:0000287">
    <property type="term" value="F:magnesium ion binding"/>
    <property type="evidence" value="ECO:0007669"/>
    <property type="project" value="UniProtKB-UniRule"/>
</dbReference>
<dbReference type="GO" id="GO:0000105">
    <property type="term" value="P:L-histidine biosynthetic process"/>
    <property type="evidence" value="ECO:0007669"/>
    <property type="project" value="UniProtKB-UniRule"/>
</dbReference>
<dbReference type="CDD" id="cd13593">
    <property type="entry name" value="PBP2_HisGL3"/>
    <property type="match status" value="1"/>
</dbReference>
<dbReference type="FunFam" id="3.30.70.120:FF:000002">
    <property type="entry name" value="ATP phosphoribosyltransferase"/>
    <property type="match status" value="1"/>
</dbReference>
<dbReference type="Gene3D" id="3.30.70.120">
    <property type="match status" value="1"/>
</dbReference>
<dbReference type="Gene3D" id="3.40.190.10">
    <property type="entry name" value="Periplasmic binding protein-like II"/>
    <property type="match status" value="2"/>
</dbReference>
<dbReference type="HAMAP" id="MF_00079">
    <property type="entry name" value="HisG_Long"/>
    <property type="match status" value="1"/>
</dbReference>
<dbReference type="InterPro" id="IPR020621">
    <property type="entry name" value="ATP-PRT_HisG_long"/>
</dbReference>
<dbReference type="InterPro" id="IPR013820">
    <property type="entry name" value="ATP_PRibTrfase_cat"/>
</dbReference>
<dbReference type="InterPro" id="IPR001348">
    <property type="entry name" value="ATP_PRibTrfase_HisG"/>
</dbReference>
<dbReference type="InterPro" id="IPR013115">
    <property type="entry name" value="HisG_C"/>
</dbReference>
<dbReference type="InterPro" id="IPR011322">
    <property type="entry name" value="N-reg_PII-like_a/b"/>
</dbReference>
<dbReference type="InterPro" id="IPR015867">
    <property type="entry name" value="N-reg_PII/ATP_PRibTrfase_C"/>
</dbReference>
<dbReference type="NCBIfam" id="TIGR00070">
    <property type="entry name" value="hisG"/>
    <property type="match status" value="1"/>
</dbReference>
<dbReference type="NCBIfam" id="TIGR03455">
    <property type="entry name" value="HisG_C-term"/>
    <property type="match status" value="1"/>
</dbReference>
<dbReference type="PANTHER" id="PTHR21403:SF10">
    <property type="entry name" value="ATP PHOSPHORIBOSYLTRANSFERASE"/>
    <property type="match status" value="1"/>
</dbReference>
<dbReference type="PANTHER" id="PTHR21403">
    <property type="entry name" value="ATP PHOSPHORIBOSYLTRANSFERASE ATP-PRTASE"/>
    <property type="match status" value="1"/>
</dbReference>
<dbReference type="Pfam" id="PF01634">
    <property type="entry name" value="HisG"/>
    <property type="match status" value="1"/>
</dbReference>
<dbReference type="Pfam" id="PF08029">
    <property type="entry name" value="HisG_C"/>
    <property type="match status" value="1"/>
</dbReference>
<dbReference type="SUPFAM" id="SSF54913">
    <property type="entry name" value="GlnB-like"/>
    <property type="match status" value="1"/>
</dbReference>
<dbReference type="SUPFAM" id="SSF53850">
    <property type="entry name" value="Periplasmic binding protein-like II"/>
    <property type="match status" value="1"/>
</dbReference>
<feature type="chain" id="PRO_1000075263" description="ATP phosphoribosyltransferase">
    <location>
        <begin position="1"/>
        <end position="294"/>
    </location>
</feature>
<sequence>MSNSNRVLKLGLPKGSLQDSTIELFGNAGFHFSVQSRSYFPSIDDDELEAILIRAQEMAHYVELGAFDVGLTGKDWIIETGADVVEVADLVYSKASMRPVRWVLAVPENSPIKTVKDLEGKHIATEVVNITRKYLESNGVTAAVEFSWGATEVKPPDLADAIVEVTETGSSLRANKLRIVETILESNTKLIANKSSWDDPWKREKIESMALMLQGAINAQGKVGLKMNAPESALEAITAMIPALRQPTVSHLAHNQWVALEVIVLEREVRKLIPELKKAGAEGIFEYDINKLID</sequence>
<proteinExistence type="inferred from homology"/>
<reference key="1">
    <citation type="submission" date="2007-03" db="EMBL/GenBank/DDBJ databases">
        <title>Complete sequence of Prosthecochloris vibrioformis DSM 265.</title>
        <authorList>
            <consortium name="US DOE Joint Genome Institute"/>
            <person name="Copeland A."/>
            <person name="Lucas S."/>
            <person name="Lapidus A."/>
            <person name="Barry K."/>
            <person name="Detter J.C."/>
            <person name="Glavina del Rio T."/>
            <person name="Hammon N."/>
            <person name="Israni S."/>
            <person name="Pitluck S."/>
            <person name="Schmutz J."/>
            <person name="Larimer F."/>
            <person name="Land M."/>
            <person name="Hauser L."/>
            <person name="Mikhailova N."/>
            <person name="Li T."/>
            <person name="Overmann J."/>
            <person name="Schuster S.C."/>
            <person name="Bryant D.A."/>
            <person name="Richardson P."/>
        </authorList>
    </citation>
    <scope>NUCLEOTIDE SEQUENCE [LARGE SCALE GENOMIC DNA]</scope>
    <source>
        <strain>DSM 265 / 1930</strain>
    </source>
</reference>
<accession>A4SCX0</accession>
<evidence type="ECO:0000255" key="1">
    <source>
        <dbReference type="HAMAP-Rule" id="MF_00079"/>
    </source>
</evidence>
<gene>
    <name evidence="1" type="primary">hisG</name>
    <name type="ordered locus">Cvib_0307</name>
</gene>
<protein>
    <recommendedName>
        <fullName evidence="1">ATP phosphoribosyltransferase</fullName>
        <shortName evidence="1">ATP-PRT</shortName>
        <shortName evidence="1">ATP-PRTase</shortName>
        <ecNumber evidence="1">2.4.2.17</ecNumber>
    </recommendedName>
</protein>
<name>HIS1_CHLPM</name>
<keyword id="KW-0028">Amino-acid biosynthesis</keyword>
<keyword id="KW-0067">ATP-binding</keyword>
<keyword id="KW-0963">Cytoplasm</keyword>
<keyword id="KW-0328">Glycosyltransferase</keyword>
<keyword id="KW-0368">Histidine biosynthesis</keyword>
<keyword id="KW-0460">Magnesium</keyword>
<keyword id="KW-0479">Metal-binding</keyword>
<keyword id="KW-0547">Nucleotide-binding</keyword>
<keyword id="KW-0808">Transferase</keyword>